<organism>
    <name type="scientific">Acholeplasma laidlawii (strain PG-8A)</name>
    <dbReference type="NCBI Taxonomy" id="441768"/>
    <lineage>
        <taxon>Bacteria</taxon>
        <taxon>Bacillati</taxon>
        <taxon>Mycoplasmatota</taxon>
        <taxon>Mollicutes</taxon>
        <taxon>Acholeplasmatales</taxon>
        <taxon>Acholeplasmataceae</taxon>
        <taxon>Acholeplasma</taxon>
    </lineage>
</organism>
<evidence type="ECO:0000255" key="1">
    <source>
        <dbReference type="HAMAP-Rule" id="MF_00484"/>
    </source>
</evidence>
<dbReference type="EC" id="2.4.1.21" evidence="1"/>
<dbReference type="EMBL" id="CP000896">
    <property type="protein sequence ID" value="ABX81136.1"/>
    <property type="molecule type" value="Genomic_DNA"/>
</dbReference>
<dbReference type="RefSeq" id="WP_012242467.1">
    <property type="nucleotide sequence ID" value="NC_010163.1"/>
</dbReference>
<dbReference type="SMR" id="A9NFK6"/>
<dbReference type="STRING" id="441768.ACL_0518"/>
<dbReference type="CAZy" id="GT5">
    <property type="family name" value="Glycosyltransferase Family 5"/>
</dbReference>
<dbReference type="GeneID" id="41338698"/>
<dbReference type="KEGG" id="acl:ACL_0518"/>
<dbReference type="eggNOG" id="COG0297">
    <property type="taxonomic scope" value="Bacteria"/>
</dbReference>
<dbReference type="HOGENOM" id="CLU_009583_18_2_14"/>
<dbReference type="OrthoDB" id="9808590at2"/>
<dbReference type="UniPathway" id="UPA00164"/>
<dbReference type="Proteomes" id="UP000008558">
    <property type="component" value="Chromosome"/>
</dbReference>
<dbReference type="GO" id="GO:0009011">
    <property type="term" value="F:alpha-1,4-glucan glucosyltransferase (ADP-glucose donor) activity"/>
    <property type="evidence" value="ECO:0007669"/>
    <property type="project" value="UniProtKB-UniRule"/>
</dbReference>
<dbReference type="GO" id="GO:0004373">
    <property type="term" value="F:alpha-1,4-glucan glucosyltransferase (UDP-glucose donor) activity"/>
    <property type="evidence" value="ECO:0007669"/>
    <property type="project" value="InterPro"/>
</dbReference>
<dbReference type="GO" id="GO:0005978">
    <property type="term" value="P:glycogen biosynthetic process"/>
    <property type="evidence" value="ECO:0007669"/>
    <property type="project" value="UniProtKB-UniRule"/>
</dbReference>
<dbReference type="CDD" id="cd03791">
    <property type="entry name" value="GT5_Glycogen_synthase_DULL1-like"/>
    <property type="match status" value="1"/>
</dbReference>
<dbReference type="Gene3D" id="3.40.50.2000">
    <property type="entry name" value="Glycogen Phosphorylase B"/>
    <property type="match status" value="2"/>
</dbReference>
<dbReference type="HAMAP" id="MF_00484">
    <property type="entry name" value="Glycogen_synth"/>
    <property type="match status" value="1"/>
</dbReference>
<dbReference type="InterPro" id="IPR001296">
    <property type="entry name" value="Glyco_trans_1"/>
</dbReference>
<dbReference type="InterPro" id="IPR011835">
    <property type="entry name" value="GS/SS"/>
</dbReference>
<dbReference type="InterPro" id="IPR013534">
    <property type="entry name" value="Starch_synth_cat_dom"/>
</dbReference>
<dbReference type="NCBIfam" id="TIGR02095">
    <property type="entry name" value="glgA"/>
    <property type="match status" value="1"/>
</dbReference>
<dbReference type="PANTHER" id="PTHR45825:SF11">
    <property type="entry name" value="ALPHA AMYLASE DOMAIN-CONTAINING PROTEIN"/>
    <property type="match status" value="1"/>
</dbReference>
<dbReference type="PANTHER" id="PTHR45825">
    <property type="entry name" value="GRANULE-BOUND STARCH SYNTHASE 1, CHLOROPLASTIC/AMYLOPLASTIC"/>
    <property type="match status" value="1"/>
</dbReference>
<dbReference type="Pfam" id="PF08323">
    <property type="entry name" value="Glyco_transf_5"/>
    <property type="match status" value="1"/>
</dbReference>
<dbReference type="Pfam" id="PF00534">
    <property type="entry name" value="Glycos_transf_1"/>
    <property type="match status" value="1"/>
</dbReference>
<dbReference type="SUPFAM" id="SSF53756">
    <property type="entry name" value="UDP-Glycosyltransferase/glycogen phosphorylase"/>
    <property type="match status" value="1"/>
</dbReference>
<feature type="chain" id="PRO_1000081318" description="Glycogen synthase">
    <location>
        <begin position="1"/>
        <end position="478"/>
    </location>
</feature>
<feature type="binding site" evidence="1">
    <location>
        <position position="15"/>
    </location>
    <ligand>
        <name>ADP-alpha-D-glucose</name>
        <dbReference type="ChEBI" id="CHEBI:57498"/>
    </ligand>
</feature>
<accession>A9NFK6</accession>
<proteinExistence type="inferred from homology"/>
<protein>
    <recommendedName>
        <fullName evidence="1">Glycogen synthase</fullName>
        <ecNumber evidence="1">2.4.1.21</ecNumber>
    </recommendedName>
    <alternativeName>
        <fullName evidence="1">Starch [bacterial glycogen] synthase</fullName>
    </alternativeName>
</protein>
<sequence length="478" mass="55707">MKILFCSSEAFPFSKTGGLADMAYFLPKSINVLGHEIVVITPYYEGIKKHHETMTYLGTKTIYMGHGEVVVNYYKLVYESITYIFVQNMHYFEREGLYGYHDDAERFAAFSYAILESLDIIEFYPDILHINDWQTSMIPYLLDKHYRHQSFNYFRIHTLLTIHNLQYQGDFDKDVAKFFNTDFDYTYIHFDRVNYLKAGIERATKINTVSPTYSKEVMTREYGFSLDGSLQNRINDFSGILNGIDDQNTFNPKTDKYLIKTYSVSNHKSGKNLNKQFLLEHFGLDKNLDEPLIAYVGRLADQKGLGLMEYCLEEVIQYSNAKFILMGSGDKAYEDYFRYLTYKYPNKVGNYIGFNEKIAHIIYGASDIFMMPSRFEPCGLGQMIAMKYGSLPIVRETGGLKDSVIPYNKYTQEGTGFSFKNYDSYDLKEKLFEAINLYNEDKKTWQILVKQAMKSDFGLNQMARAYEELYKNIIGEKI</sequence>
<gene>
    <name evidence="1" type="primary">glgA</name>
    <name type="ordered locus">ACL_0518</name>
</gene>
<comment type="function">
    <text evidence="1">Synthesizes alpha-1,4-glucan chains using ADP-glucose.</text>
</comment>
<comment type="catalytic activity">
    <reaction evidence="1">
        <text>[(1-&gt;4)-alpha-D-glucosyl](n) + ADP-alpha-D-glucose = [(1-&gt;4)-alpha-D-glucosyl](n+1) + ADP + H(+)</text>
        <dbReference type="Rhea" id="RHEA:18189"/>
        <dbReference type="Rhea" id="RHEA-COMP:9584"/>
        <dbReference type="Rhea" id="RHEA-COMP:9587"/>
        <dbReference type="ChEBI" id="CHEBI:15378"/>
        <dbReference type="ChEBI" id="CHEBI:15444"/>
        <dbReference type="ChEBI" id="CHEBI:57498"/>
        <dbReference type="ChEBI" id="CHEBI:456216"/>
        <dbReference type="EC" id="2.4.1.21"/>
    </reaction>
</comment>
<comment type="pathway">
    <text evidence="1">Glycan biosynthesis; glycogen biosynthesis.</text>
</comment>
<comment type="similarity">
    <text evidence="1">Belongs to the glycosyltransferase 1 family. Bacterial/plant glycogen synthase subfamily.</text>
</comment>
<name>GLGA_ACHLI</name>
<keyword id="KW-0320">Glycogen biosynthesis</keyword>
<keyword id="KW-0328">Glycosyltransferase</keyword>
<keyword id="KW-1185">Reference proteome</keyword>
<keyword id="KW-0808">Transferase</keyword>
<reference key="1">
    <citation type="journal article" date="2011" name="J. Bacteriol.">
        <title>Complete genome and proteome of Acholeplasma laidlawii.</title>
        <authorList>
            <person name="Lazarev V.N."/>
            <person name="Levitskii S.A."/>
            <person name="Basovskii Y.I."/>
            <person name="Chukin M.M."/>
            <person name="Akopian T.A."/>
            <person name="Vereshchagin V.V."/>
            <person name="Kostrjukova E.S."/>
            <person name="Kovaleva G.Y."/>
            <person name="Kazanov M.D."/>
            <person name="Malko D.B."/>
            <person name="Vitreschak A.G."/>
            <person name="Sernova N.V."/>
            <person name="Gelfand M.S."/>
            <person name="Demina I.A."/>
            <person name="Serebryakova M.V."/>
            <person name="Galyamina M.A."/>
            <person name="Vtyurin N.N."/>
            <person name="Rogov S.I."/>
            <person name="Alexeev D.G."/>
            <person name="Ladygina V.G."/>
            <person name="Govorun V.M."/>
        </authorList>
    </citation>
    <scope>NUCLEOTIDE SEQUENCE [LARGE SCALE GENOMIC DNA]</scope>
    <source>
        <strain>PG-8A</strain>
    </source>
</reference>